<dbReference type="EC" id="2.1.1.199" evidence="1"/>
<dbReference type="EMBL" id="CP000141">
    <property type="protein sequence ID" value="ABB14552.1"/>
    <property type="molecule type" value="Genomic_DNA"/>
</dbReference>
<dbReference type="RefSeq" id="WP_011344970.1">
    <property type="nucleotide sequence ID" value="NC_007503.1"/>
</dbReference>
<dbReference type="SMR" id="Q3AAD7"/>
<dbReference type="FunCoup" id="Q3AAD7">
    <property type="interactions" value="384"/>
</dbReference>
<dbReference type="STRING" id="246194.CHY_2078"/>
<dbReference type="KEGG" id="chy:CHY_2078"/>
<dbReference type="eggNOG" id="COG0275">
    <property type="taxonomic scope" value="Bacteria"/>
</dbReference>
<dbReference type="HOGENOM" id="CLU_038422_2_0_9"/>
<dbReference type="InParanoid" id="Q3AAD7"/>
<dbReference type="OrthoDB" id="9806637at2"/>
<dbReference type="Proteomes" id="UP000002706">
    <property type="component" value="Chromosome"/>
</dbReference>
<dbReference type="GO" id="GO:0005737">
    <property type="term" value="C:cytoplasm"/>
    <property type="evidence" value="ECO:0007669"/>
    <property type="project" value="UniProtKB-SubCell"/>
</dbReference>
<dbReference type="GO" id="GO:0071424">
    <property type="term" value="F:rRNA (cytosine-N4-)-methyltransferase activity"/>
    <property type="evidence" value="ECO:0007669"/>
    <property type="project" value="UniProtKB-UniRule"/>
</dbReference>
<dbReference type="GO" id="GO:0070475">
    <property type="term" value="P:rRNA base methylation"/>
    <property type="evidence" value="ECO:0007669"/>
    <property type="project" value="UniProtKB-UniRule"/>
</dbReference>
<dbReference type="CDD" id="cd02440">
    <property type="entry name" value="AdoMet_MTases"/>
    <property type="match status" value="1"/>
</dbReference>
<dbReference type="FunFam" id="1.10.150.170:FF:000001">
    <property type="entry name" value="Ribosomal RNA small subunit methyltransferase H"/>
    <property type="match status" value="1"/>
</dbReference>
<dbReference type="Gene3D" id="1.10.150.170">
    <property type="entry name" value="Putative methyltransferase TM0872, insert domain"/>
    <property type="match status" value="1"/>
</dbReference>
<dbReference type="Gene3D" id="3.40.50.150">
    <property type="entry name" value="Vaccinia Virus protein VP39"/>
    <property type="match status" value="1"/>
</dbReference>
<dbReference type="HAMAP" id="MF_01007">
    <property type="entry name" value="16SrRNA_methyltr_H"/>
    <property type="match status" value="1"/>
</dbReference>
<dbReference type="InterPro" id="IPR002903">
    <property type="entry name" value="RsmH"/>
</dbReference>
<dbReference type="InterPro" id="IPR023397">
    <property type="entry name" value="SAM-dep_MeTrfase_MraW_recog"/>
</dbReference>
<dbReference type="InterPro" id="IPR029063">
    <property type="entry name" value="SAM-dependent_MTases_sf"/>
</dbReference>
<dbReference type="NCBIfam" id="TIGR00006">
    <property type="entry name" value="16S rRNA (cytosine(1402)-N(4))-methyltransferase RsmH"/>
    <property type="match status" value="1"/>
</dbReference>
<dbReference type="PANTHER" id="PTHR11265:SF0">
    <property type="entry name" value="12S RRNA N4-METHYLCYTIDINE METHYLTRANSFERASE"/>
    <property type="match status" value="1"/>
</dbReference>
<dbReference type="PANTHER" id="PTHR11265">
    <property type="entry name" value="S-ADENOSYL-METHYLTRANSFERASE MRAW"/>
    <property type="match status" value="1"/>
</dbReference>
<dbReference type="Pfam" id="PF01795">
    <property type="entry name" value="Methyltransf_5"/>
    <property type="match status" value="1"/>
</dbReference>
<dbReference type="PIRSF" id="PIRSF004486">
    <property type="entry name" value="MraW"/>
    <property type="match status" value="1"/>
</dbReference>
<dbReference type="SUPFAM" id="SSF81799">
    <property type="entry name" value="Putative methyltransferase TM0872, insert domain"/>
    <property type="match status" value="1"/>
</dbReference>
<dbReference type="SUPFAM" id="SSF53335">
    <property type="entry name" value="S-adenosyl-L-methionine-dependent methyltransferases"/>
    <property type="match status" value="1"/>
</dbReference>
<sequence>MEFSHVPVLLNETIEHLNLKAGGVYVDATLGGGGHSEEILKRADCRVVGLDQDEDALNHAAKRLAPFGDRFIPVKSNFRNIRKVVYRLGLDAVDGVLMDLGVSSFQLDNPLKGFSFQHDGPLDMRMDPQNPKTAADVVNTYPEKELIRIFYEYGEERYAPQIARAIVKRREKKPFTSTLELAEEIIRAVPAKARREKHPAKRVFQAIRIEVNDELSSLEEGLVGAVEVLKPGGRIVVITFHSLEDRLVKNFFRREENPCICPKDFPMCVCGKKPRLKVITKKPLVPSEEEIEKNRRAHSAKLRAAEKLSFA</sequence>
<evidence type="ECO:0000255" key="1">
    <source>
        <dbReference type="HAMAP-Rule" id="MF_01007"/>
    </source>
</evidence>
<evidence type="ECO:0000256" key="2">
    <source>
        <dbReference type="SAM" id="MobiDB-lite"/>
    </source>
</evidence>
<protein>
    <recommendedName>
        <fullName evidence="1">Ribosomal RNA small subunit methyltransferase H</fullName>
        <ecNumber evidence="1">2.1.1.199</ecNumber>
    </recommendedName>
    <alternativeName>
        <fullName evidence="1">16S rRNA m(4)C1402 methyltransferase</fullName>
    </alternativeName>
    <alternativeName>
        <fullName evidence="1">rRNA (cytosine-N(4)-)-methyltransferase RsmH</fullName>
    </alternativeName>
</protein>
<feature type="chain" id="PRO_0000223534" description="Ribosomal RNA small subunit methyltransferase H">
    <location>
        <begin position="1"/>
        <end position="311"/>
    </location>
</feature>
<feature type="region of interest" description="Disordered" evidence="2">
    <location>
        <begin position="289"/>
        <end position="311"/>
    </location>
</feature>
<feature type="binding site" evidence="1">
    <location>
        <begin position="33"/>
        <end position="35"/>
    </location>
    <ligand>
        <name>S-adenosyl-L-methionine</name>
        <dbReference type="ChEBI" id="CHEBI:59789"/>
    </ligand>
</feature>
<feature type="binding site" evidence="1">
    <location>
        <position position="51"/>
    </location>
    <ligand>
        <name>S-adenosyl-L-methionine</name>
        <dbReference type="ChEBI" id="CHEBI:59789"/>
    </ligand>
</feature>
<feature type="binding site" evidence="1">
    <location>
        <position position="78"/>
    </location>
    <ligand>
        <name>S-adenosyl-L-methionine</name>
        <dbReference type="ChEBI" id="CHEBI:59789"/>
    </ligand>
</feature>
<feature type="binding site" evidence="1">
    <location>
        <position position="99"/>
    </location>
    <ligand>
        <name>S-adenosyl-L-methionine</name>
        <dbReference type="ChEBI" id="CHEBI:59789"/>
    </ligand>
</feature>
<feature type="binding site" evidence="1">
    <location>
        <position position="106"/>
    </location>
    <ligand>
        <name>S-adenosyl-L-methionine</name>
        <dbReference type="ChEBI" id="CHEBI:59789"/>
    </ligand>
</feature>
<name>RSMH_CARHZ</name>
<proteinExistence type="inferred from homology"/>
<accession>Q3AAD7</accession>
<organism>
    <name type="scientific">Carboxydothermus hydrogenoformans (strain ATCC BAA-161 / DSM 6008 / Z-2901)</name>
    <dbReference type="NCBI Taxonomy" id="246194"/>
    <lineage>
        <taxon>Bacteria</taxon>
        <taxon>Bacillati</taxon>
        <taxon>Bacillota</taxon>
        <taxon>Clostridia</taxon>
        <taxon>Thermoanaerobacterales</taxon>
        <taxon>Thermoanaerobacteraceae</taxon>
        <taxon>Carboxydothermus</taxon>
    </lineage>
</organism>
<reference key="1">
    <citation type="journal article" date="2005" name="PLoS Genet.">
        <title>Life in hot carbon monoxide: the complete genome sequence of Carboxydothermus hydrogenoformans Z-2901.</title>
        <authorList>
            <person name="Wu M."/>
            <person name="Ren Q."/>
            <person name="Durkin A.S."/>
            <person name="Daugherty S.C."/>
            <person name="Brinkac L.M."/>
            <person name="Dodson R.J."/>
            <person name="Madupu R."/>
            <person name="Sullivan S.A."/>
            <person name="Kolonay J.F."/>
            <person name="Nelson W.C."/>
            <person name="Tallon L.J."/>
            <person name="Jones K.M."/>
            <person name="Ulrich L.E."/>
            <person name="Gonzalez J.M."/>
            <person name="Zhulin I.B."/>
            <person name="Robb F.T."/>
            <person name="Eisen J.A."/>
        </authorList>
    </citation>
    <scope>NUCLEOTIDE SEQUENCE [LARGE SCALE GENOMIC DNA]</scope>
    <source>
        <strain>ATCC BAA-161 / DSM 6008 / Z-2901</strain>
    </source>
</reference>
<gene>
    <name evidence="1" type="primary">rsmH</name>
    <name type="synonym">mraW</name>
    <name type="ordered locus">CHY_2078</name>
</gene>
<keyword id="KW-0963">Cytoplasm</keyword>
<keyword id="KW-0489">Methyltransferase</keyword>
<keyword id="KW-1185">Reference proteome</keyword>
<keyword id="KW-0698">rRNA processing</keyword>
<keyword id="KW-0949">S-adenosyl-L-methionine</keyword>
<keyword id="KW-0808">Transferase</keyword>
<comment type="function">
    <text evidence="1">Specifically methylates the N4 position of cytidine in position 1402 (C1402) of 16S rRNA.</text>
</comment>
<comment type="catalytic activity">
    <reaction evidence="1">
        <text>cytidine(1402) in 16S rRNA + S-adenosyl-L-methionine = N(4)-methylcytidine(1402) in 16S rRNA + S-adenosyl-L-homocysteine + H(+)</text>
        <dbReference type="Rhea" id="RHEA:42928"/>
        <dbReference type="Rhea" id="RHEA-COMP:10286"/>
        <dbReference type="Rhea" id="RHEA-COMP:10287"/>
        <dbReference type="ChEBI" id="CHEBI:15378"/>
        <dbReference type="ChEBI" id="CHEBI:57856"/>
        <dbReference type="ChEBI" id="CHEBI:59789"/>
        <dbReference type="ChEBI" id="CHEBI:74506"/>
        <dbReference type="ChEBI" id="CHEBI:82748"/>
        <dbReference type="EC" id="2.1.1.199"/>
    </reaction>
</comment>
<comment type="subcellular location">
    <subcellularLocation>
        <location evidence="1">Cytoplasm</location>
    </subcellularLocation>
</comment>
<comment type="similarity">
    <text evidence="1">Belongs to the methyltransferase superfamily. RsmH family.</text>
</comment>